<sequence length="772" mass="84449">MHPGGQAILFATDLDESSSVNAQLCELRKDGTMVDDSTQGGELEASEAGAEARHHWTELAQRILDAQDAYYARDAPTISDAEYDRLMVELKKVEDDHPELRTPDSPTQRVGAPQRITDFAPVKHLERLLSLDNVFTRDELSEWMNRVATAVGKIPNFLCELKIDGLAVDLVYRDGQLVSGATRGDGRIGEDVTANVRTIAAIPRKLTGDDVPRLLEVRGEVFFPVADFTDLNAALIEAGKNPFANPRNAAAGSLRQKDSRVTASRPLSMIVHGIGVLEGHDFPSQGHAYDKLAQWGLPVSPYFKIVEHVDEVHEFVTRWGESRDEASHQIDGVVVKVDDVSLQRKLGATSRAPRWAIAYKYPPEEVNTELLDIRVNVGRTGRVTPYGVMRPVTVAGSTVEMATLHNAFEVKRKGVLIGDTVVLRKAGDVIPEILGPVVELRNGTEREFLMPDHCPSCGAELAYEKNGDKDLRCPNAQGCPSQLHERVFGLASRGALDIEALGWEAAIALTDPENQRPGDDEVAEELPKRQTAVLSSEAGLFDLQLDDLAEIKVWRRRKVNGGPGPWQLEPYFFTKATAKKPSTPTATTKKMFDELAKAKSQPLWRVLVALSIRHVGPTAARALATHFGSVEAIREASVEELAGVDGVGEIIAESVKRWFEVDWHQEIISRWAAAGVRMADDRDEAPEQTLEGLTVVVTGSLEGFSRDEAKEAIVSRGGKAAGSVSRKTDYVVVGENAGSKETKARDLGRPILDEAGFRYLLENGPQGITTIG</sequence>
<keyword id="KW-0227">DNA damage</keyword>
<keyword id="KW-0234">DNA repair</keyword>
<keyword id="KW-0235">DNA replication</keyword>
<keyword id="KW-0436">Ligase</keyword>
<keyword id="KW-0460">Magnesium</keyword>
<keyword id="KW-0464">Manganese</keyword>
<keyword id="KW-0479">Metal-binding</keyword>
<keyword id="KW-0520">NAD</keyword>
<keyword id="KW-0862">Zinc</keyword>
<organism>
    <name type="scientific">Cutibacterium acnes (strain DSM 16379 / KPA171202)</name>
    <name type="common">Propionibacterium acnes</name>
    <dbReference type="NCBI Taxonomy" id="267747"/>
    <lineage>
        <taxon>Bacteria</taxon>
        <taxon>Bacillati</taxon>
        <taxon>Actinomycetota</taxon>
        <taxon>Actinomycetes</taxon>
        <taxon>Propionibacteriales</taxon>
        <taxon>Propionibacteriaceae</taxon>
        <taxon>Cutibacterium</taxon>
    </lineage>
</organism>
<protein>
    <recommendedName>
        <fullName evidence="1">DNA ligase</fullName>
        <ecNumber evidence="1">6.5.1.2</ecNumber>
    </recommendedName>
    <alternativeName>
        <fullName evidence="1">Polydeoxyribonucleotide synthase [NAD(+)]</fullName>
    </alternativeName>
</protein>
<accession>Q6A7A2</accession>
<name>DNLJ_CUTAK</name>
<dbReference type="EC" id="6.5.1.2" evidence="1"/>
<dbReference type="EMBL" id="AE017283">
    <property type="protein sequence ID" value="AAT83363.1"/>
    <property type="molecule type" value="Genomic_DNA"/>
</dbReference>
<dbReference type="SMR" id="Q6A7A2"/>
<dbReference type="EnsemblBacteria" id="AAT83363">
    <property type="protein sequence ID" value="AAT83363"/>
    <property type="gene ID" value="PPA1626"/>
</dbReference>
<dbReference type="KEGG" id="pac:PPA1626"/>
<dbReference type="eggNOG" id="COG0272">
    <property type="taxonomic scope" value="Bacteria"/>
</dbReference>
<dbReference type="HOGENOM" id="CLU_007764_2_1_11"/>
<dbReference type="Proteomes" id="UP000000603">
    <property type="component" value="Chromosome"/>
</dbReference>
<dbReference type="GO" id="GO:0005829">
    <property type="term" value="C:cytosol"/>
    <property type="evidence" value="ECO:0007669"/>
    <property type="project" value="TreeGrafter"/>
</dbReference>
<dbReference type="GO" id="GO:0003911">
    <property type="term" value="F:DNA ligase (NAD+) activity"/>
    <property type="evidence" value="ECO:0007669"/>
    <property type="project" value="UniProtKB-UniRule"/>
</dbReference>
<dbReference type="GO" id="GO:0046872">
    <property type="term" value="F:metal ion binding"/>
    <property type="evidence" value="ECO:0007669"/>
    <property type="project" value="UniProtKB-KW"/>
</dbReference>
<dbReference type="GO" id="GO:0006281">
    <property type="term" value="P:DNA repair"/>
    <property type="evidence" value="ECO:0007669"/>
    <property type="project" value="UniProtKB-KW"/>
</dbReference>
<dbReference type="GO" id="GO:0006260">
    <property type="term" value="P:DNA replication"/>
    <property type="evidence" value="ECO:0007669"/>
    <property type="project" value="UniProtKB-KW"/>
</dbReference>
<dbReference type="CDD" id="cd17748">
    <property type="entry name" value="BRCT_DNA_ligase_like"/>
    <property type="match status" value="1"/>
</dbReference>
<dbReference type="CDD" id="cd00114">
    <property type="entry name" value="LIGANc"/>
    <property type="match status" value="1"/>
</dbReference>
<dbReference type="FunFam" id="1.10.150.20:FF:000006">
    <property type="entry name" value="DNA ligase"/>
    <property type="match status" value="1"/>
</dbReference>
<dbReference type="FunFam" id="2.40.50.140:FF:000012">
    <property type="entry name" value="DNA ligase"/>
    <property type="match status" value="1"/>
</dbReference>
<dbReference type="FunFam" id="3.30.470.30:FF:000001">
    <property type="entry name" value="DNA ligase"/>
    <property type="match status" value="1"/>
</dbReference>
<dbReference type="FunFam" id="3.40.50.10190:FF:000054">
    <property type="entry name" value="DNA ligase"/>
    <property type="match status" value="1"/>
</dbReference>
<dbReference type="Gene3D" id="6.20.10.30">
    <property type="match status" value="1"/>
</dbReference>
<dbReference type="Gene3D" id="1.10.150.20">
    <property type="entry name" value="5' to 3' exonuclease, C-terminal subdomain"/>
    <property type="match status" value="2"/>
</dbReference>
<dbReference type="Gene3D" id="3.40.50.10190">
    <property type="entry name" value="BRCT domain"/>
    <property type="match status" value="1"/>
</dbReference>
<dbReference type="Gene3D" id="3.30.470.30">
    <property type="entry name" value="DNA ligase/mRNA capping enzyme"/>
    <property type="match status" value="1"/>
</dbReference>
<dbReference type="Gene3D" id="1.10.287.610">
    <property type="entry name" value="Helix hairpin bin"/>
    <property type="match status" value="1"/>
</dbReference>
<dbReference type="Gene3D" id="2.40.50.140">
    <property type="entry name" value="Nucleic acid-binding proteins"/>
    <property type="match status" value="1"/>
</dbReference>
<dbReference type="HAMAP" id="MF_01588">
    <property type="entry name" value="DNA_ligase_A"/>
    <property type="match status" value="1"/>
</dbReference>
<dbReference type="InterPro" id="IPR001357">
    <property type="entry name" value="BRCT_dom"/>
</dbReference>
<dbReference type="InterPro" id="IPR036420">
    <property type="entry name" value="BRCT_dom_sf"/>
</dbReference>
<dbReference type="InterPro" id="IPR041663">
    <property type="entry name" value="DisA/LigA_HHH"/>
</dbReference>
<dbReference type="InterPro" id="IPR001679">
    <property type="entry name" value="DNA_ligase"/>
</dbReference>
<dbReference type="InterPro" id="IPR018239">
    <property type="entry name" value="DNA_ligase_AS"/>
</dbReference>
<dbReference type="InterPro" id="IPR033136">
    <property type="entry name" value="DNA_ligase_CS"/>
</dbReference>
<dbReference type="InterPro" id="IPR013839">
    <property type="entry name" value="DNAligase_adenylation"/>
</dbReference>
<dbReference type="InterPro" id="IPR013840">
    <property type="entry name" value="DNAligase_N"/>
</dbReference>
<dbReference type="InterPro" id="IPR012340">
    <property type="entry name" value="NA-bd_OB-fold"/>
</dbReference>
<dbReference type="InterPro" id="IPR004150">
    <property type="entry name" value="NAD_DNA_ligase_OB"/>
</dbReference>
<dbReference type="InterPro" id="IPR010994">
    <property type="entry name" value="RuvA_2-like"/>
</dbReference>
<dbReference type="InterPro" id="IPR004149">
    <property type="entry name" value="Znf_DNAligase_C4"/>
</dbReference>
<dbReference type="NCBIfam" id="TIGR00575">
    <property type="entry name" value="dnlj"/>
    <property type="match status" value="1"/>
</dbReference>
<dbReference type="NCBIfam" id="NF005932">
    <property type="entry name" value="PRK07956.1"/>
    <property type="match status" value="1"/>
</dbReference>
<dbReference type="PANTHER" id="PTHR23389">
    <property type="entry name" value="CHROMOSOME TRANSMISSION FIDELITY FACTOR 18"/>
    <property type="match status" value="1"/>
</dbReference>
<dbReference type="PANTHER" id="PTHR23389:SF9">
    <property type="entry name" value="DNA LIGASE"/>
    <property type="match status" value="1"/>
</dbReference>
<dbReference type="Pfam" id="PF00533">
    <property type="entry name" value="BRCT"/>
    <property type="match status" value="1"/>
</dbReference>
<dbReference type="Pfam" id="PF01653">
    <property type="entry name" value="DNA_ligase_aden"/>
    <property type="match status" value="1"/>
</dbReference>
<dbReference type="Pfam" id="PF03120">
    <property type="entry name" value="DNA_ligase_OB"/>
    <property type="match status" value="1"/>
</dbReference>
<dbReference type="Pfam" id="PF03119">
    <property type="entry name" value="DNA_ligase_ZBD"/>
    <property type="match status" value="1"/>
</dbReference>
<dbReference type="Pfam" id="PF12826">
    <property type="entry name" value="HHH_2"/>
    <property type="match status" value="1"/>
</dbReference>
<dbReference type="PIRSF" id="PIRSF001604">
    <property type="entry name" value="LigA"/>
    <property type="match status" value="1"/>
</dbReference>
<dbReference type="SMART" id="SM00292">
    <property type="entry name" value="BRCT"/>
    <property type="match status" value="1"/>
</dbReference>
<dbReference type="SMART" id="SM00532">
    <property type="entry name" value="LIGANc"/>
    <property type="match status" value="1"/>
</dbReference>
<dbReference type="SUPFAM" id="SSF52113">
    <property type="entry name" value="BRCT domain"/>
    <property type="match status" value="1"/>
</dbReference>
<dbReference type="SUPFAM" id="SSF56091">
    <property type="entry name" value="DNA ligase/mRNA capping enzyme, catalytic domain"/>
    <property type="match status" value="1"/>
</dbReference>
<dbReference type="SUPFAM" id="SSF50249">
    <property type="entry name" value="Nucleic acid-binding proteins"/>
    <property type="match status" value="1"/>
</dbReference>
<dbReference type="SUPFAM" id="SSF47781">
    <property type="entry name" value="RuvA domain 2-like"/>
    <property type="match status" value="1"/>
</dbReference>
<dbReference type="PROSITE" id="PS50172">
    <property type="entry name" value="BRCT"/>
    <property type="match status" value="1"/>
</dbReference>
<dbReference type="PROSITE" id="PS01055">
    <property type="entry name" value="DNA_LIGASE_N1"/>
    <property type="match status" value="1"/>
</dbReference>
<dbReference type="PROSITE" id="PS01056">
    <property type="entry name" value="DNA_LIGASE_N2"/>
    <property type="match status" value="1"/>
</dbReference>
<gene>
    <name evidence="1" type="primary">ligA</name>
    <name type="ordered locus">PPA1626</name>
</gene>
<proteinExistence type="inferred from homology"/>
<reference key="1">
    <citation type="journal article" date="2004" name="Science">
        <title>The complete genome sequence of Propionibacterium acnes, a commensal of human skin.</title>
        <authorList>
            <person name="Brueggemann H."/>
            <person name="Henne A."/>
            <person name="Hoster F."/>
            <person name="Liesegang H."/>
            <person name="Wiezer A."/>
            <person name="Strittmatter A."/>
            <person name="Hujer S."/>
            <person name="Duerre P."/>
            <person name="Gottschalk G."/>
        </authorList>
    </citation>
    <scope>NUCLEOTIDE SEQUENCE [LARGE SCALE GENOMIC DNA]</scope>
    <source>
        <strain>DSM 16379 / KPA171202</strain>
    </source>
</reference>
<evidence type="ECO:0000255" key="1">
    <source>
        <dbReference type="HAMAP-Rule" id="MF_01588"/>
    </source>
</evidence>
<feature type="chain" id="PRO_0000313369" description="DNA ligase">
    <location>
        <begin position="1"/>
        <end position="772"/>
    </location>
</feature>
<feature type="domain" description="BRCT" evidence="1">
    <location>
        <begin position="685"/>
        <end position="772"/>
    </location>
</feature>
<feature type="active site" description="N6-AMP-lysine intermediate" evidence="1">
    <location>
        <position position="162"/>
    </location>
</feature>
<feature type="binding site" evidence="1">
    <location>
        <begin position="80"/>
        <end position="84"/>
    </location>
    <ligand>
        <name>NAD(+)</name>
        <dbReference type="ChEBI" id="CHEBI:57540"/>
    </ligand>
</feature>
<feature type="binding site" evidence="1">
    <location>
        <begin position="130"/>
        <end position="131"/>
    </location>
    <ligand>
        <name>NAD(+)</name>
        <dbReference type="ChEBI" id="CHEBI:57540"/>
    </ligand>
</feature>
<feature type="binding site" evidence="1">
    <location>
        <position position="160"/>
    </location>
    <ligand>
        <name>NAD(+)</name>
        <dbReference type="ChEBI" id="CHEBI:57540"/>
    </ligand>
</feature>
<feature type="binding site" evidence="1">
    <location>
        <position position="183"/>
    </location>
    <ligand>
        <name>NAD(+)</name>
        <dbReference type="ChEBI" id="CHEBI:57540"/>
    </ligand>
</feature>
<feature type="binding site" evidence="1">
    <location>
        <position position="220"/>
    </location>
    <ligand>
        <name>NAD(+)</name>
        <dbReference type="ChEBI" id="CHEBI:57540"/>
    </ligand>
</feature>
<feature type="binding site" evidence="1">
    <location>
        <position position="336"/>
    </location>
    <ligand>
        <name>NAD(+)</name>
        <dbReference type="ChEBI" id="CHEBI:57540"/>
    </ligand>
</feature>
<feature type="binding site" evidence="1">
    <location>
        <position position="360"/>
    </location>
    <ligand>
        <name>NAD(+)</name>
        <dbReference type="ChEBI" id="CHEBI:57540"/>
    </ligand>
</feature>
<feature type="binding site" evidence="1">
    <location>
        <position position="454"/>
    </location>
    <ligand>
        <name>Zn(2+)</name>
        <dbReference type="ChEBI" id="CHEBI:29105"/>
    </ligand>
</feature>
<feature type="binding site" evidence="1">
    <location>
        <position position="457"/>
    </location>
    <ligand>
        <name>Zn(2+)</name>
        <dbReference type="ChEBI" id="CHEBI:29105"/>
    </ligand>
</feature>
<feature type="binding site" evidence="1">
    <location>
        <position position="473"/>
    </location>
    <ligand>
        <name>Zn(2+)</name>
        <dbReference type="ChEBI" id="CHEBI:29105"/>
    </ligand>
</feature>
<feature type="binding site" evidence="1">
    <location>
        <position position="479"/>
    </location>
    <ligand>
        <name>Zn(2+)</name>
        <dbReference type="ChEBI" id="CHEBI:29105"/>
    </ligand>
</feature>
<comment type="function">
    <text evidence="1">DNA ligase that catalyzes the formation of phosphodiester linkages between 5'-phosphoryl and 3'-hydroxyl groups in double-stranded DNA using NAD as a coenzyme and as the energy source for the reaction. It is essential for DNA replication and repair of damaged DNA.</text>
</comment>
<comment type="catalytic activity">
    <reaction evidence="1">
        <text>NAD(+) + (deoxyribonucleotide)n-3'-hydroxyl + 5'-phospho-(deoxyribonucleotide)m = (deoxyribonucleotide)n+m + AMP + beta-nicotinamide D-nucleotide.</text>
        <dbReference type="EC" id="6.5.1.2"/>
    </reaction>
</comment>
<comment type="cofactor">
    <cofactor evidence="1">
        <name>Mg(2+)</name>
        <dbReference type="ChEBI" id="CHEBI:18420"/>
    </cofactor>
    <cofactor evidence="1">
        <name>Mn(2+)</name>
        <dbReference type="ChEBI" id="CHEBI:29035"/>
    </cofactor>
</comment>
<comment type="similarity">
    <text evidence="1">Belongs to the NAD-dependent DNA ligase family. LigA subfamily.</text>
</comment>